<feature type="chain" id="PRO_0000112133" description="ATP synthase subunit c">
    <location>
        <begin position="1"/>
        <end position="71"/>
    </location>
</feature>
<feature type="transmembrane region" description="Helical" evidence="1">
    <location>
        <begin position="5"/>
        <end position="25"/>
    </location>
</feature>
<feature type="transmembrane region" description="Helical" evidence="1">
    <location>
        <begin position="47"/>
        <end position="67"/>
    </location>
</feature>
<feature type="site" description="Reversibly protonated during proton transport" evidence="1">
    <location>
        <position position="54"/>
    </location>
</feature>
<reference key="1">
    <citation type="journal article" date="1992" name="Res. Microbiol.">
        <title>Two unrelated alkaliphilic Bacillus species possess identical deviations in sequence from those of other prokaryotes in regions of F0 proposed to be involved in proton translocation through the ATP synthase.</title>
        <authorList>
            <person name="Ivey D.M."/>
            <person name="Krulwich T.A."/>
        </authorList>
    </citation>
    <scope>NUCLEOTIDE SEQUENCE [GENOMIC DNA]</scope>
</reference>
<sequence length="71" mass="7044">MGLLGAAIVAGLAAVGGAIAVAIIVKSTIEGVTRQPELKGTLQTLMFIGVPLAEAVPIIAIVMGFLIMGNA</sequence>
<comment type="function">
    <text evidence="1">F(1)F(0) ATP synthase produces ATP from ADP in the presence of a proton or sodium gradient. F-type ATPases consist of two structural domains, F(1) containing the extramembraneous catalytic core and F(0) containing the membrane proton channel, linked together by a central stalk and a peripheral stalk. During catalysis, ATP synthesis in the catalytic domain of F(1) is coupled via a rotary mechanism of the central stalk subunits to proton translocation.</text>
</comment>
<comment type="function">
    <text evidence="1">Key component of the F(0) channel; it plays a direct role in translocation across the membrane. A homomeric c-ring of between 10-14 subunits forms the central stalk rotor element with the F(1) delta and epsilon subunits.</text>
</comment>
<comment type="subunit">
    <text evidence="1">F-type ATPases have 2 components, F(1) - the catalytic core - and F(0) - the membrane proton channel. F(1) has five subunits: alpha(3), beta(3), gamma(1), delta(1), epsilon(1). F(0) has three main subunits: a(1), b(2) and c(10-14). The alpha and beta chains form an alternating ring which encloses part of the gamma chain. F(1) is attached to F(0) by a central stalk formed by the gamma and epsilon chains, while a peripheral stalk is formed by the delta and b chains.</text>
</comment>
<comment type="subcellular location">
    <subcellularLocation>
        <location evidence="1">Cell membrane</location>
        <topology evidence="1">Multi-pass membrane protein</topology>
    </subcellularLocation>
</comment>
<comment type="similarity">
    <text evidence="1">Belongs to the ATPase C chain family.</text>
</comment>
<evidence type="ECO:0000255" key="1">
    <source>
        <dbReference type="HAMAP-Rule" id="MF_01396"/>
    </source>
</evidence>
<keyword id="KW-0066">ATP synthesis</keyword>
<keyword id="KW-1003">Cell membrane</keyword>
<keyword id="KW-0138">CF(0)</keyword>
<keyword id="KW-0375">Hydrogen ion transport</keyword>
<keyword id="KW-0406">Ion transport</keyword>
<keyword id="KW-0446">Lipid-binding</keyword>
<keyword id="KW-0472">Membrane</keyword>
<keyword id="KW-0812">Transmembrane</keyword>
<keyword id="KW-1133">Transmembrane helix</keyword>
<keyword id="KW-0813">Transport</keyword>
<organism>
    <name type="scientific">Alkalihalobacillus alcalophilus</name>
    <name type="common">Bacillus alcalophilus</name>
    <dbReference type="NCBI Taxonomy" id="1445"/>
    <lineage>
        <taxon>Bacteria</taxon>
        <taxon>Bacillati</taxon>
        <taxon>Bacillota</taxon>
        <taxon>Bacilli</taxon>
        <taxon>Bacillales</taxon>
        <taxon>Bacillaceae</taxon>
        <taxon>Alkalihalobacillus</taxon>
    </lineage>
</organism>
<proteinExistence type="inferred from homology"/>
<name>ATPL_ALKAL</name>
<protein>
    <recommendedName>
        <fullName evidence="1">ATP synthase subunit c</fullName>
    </recommendedName>
    <alternativeName>
        <fullName evidence="1">ATP synthase F(0) sector subunit c</fullName>
    </alternativeName>
    <alternativeName>
        <fullName evidence="1">F-type ATPase subunit c</fullName>
        <shortName evidence="1">F-ATPase subunit c</shortName>
    </alternativeName>
    <alternativeName>
        <fullName evidence="1">Lipid-binding protein</fullName>
    </alternativeName>
</protein>
<gene>
    <name evidence="1" type="primary">atpE</name>
</gene>
<accession>P25966</accession>
<dbReference type="EMBL" id="M84712">
    <property type="protein sequence ID" value="AAA22255.1"/>
    <property type="molecule type" value="Genomic_DNA"/>
</dbReference>
<dbReference type="PIR" id="I39784">
    <property type="entry name" value="I39784"/>
</dbReference>
<dbReference type="RefSeq" id="WP_003320626.1">
    <property type="nucleotide sequence ID" value="NZ_JARMCF010000023.1"/>
</dbReference>
<dbReference type="SMR" id="P25966"/>
<dbReference type="GO" id="GO:0005886">
    <property type="term" value="C:plasma membrane"/>
    <property type="evidence" value="ECO:0007669"/>
    <property type="project" value="UniProtKB-SubCell"/>
</dbReference>
<dbReference type="GO" id="GO:0045259">
    <property type="term" value="C:proton-transporting ATP synthase complex"/>
    <property type="evidence" value="ECO:0007669"/>
    <property type="project" value="UniProtKB-KW"/>
</dbReference>
<dbReference type="GO" id="GO:0033177">
    <property type="term" value="C:proton-transporting two-sector ATPase complex, proton-transporting domain"/>
    <property type="evidence" value="ECO:0007669"/>
    <property type="project" value="InterPro"/>
</dbReference>
<dbReference type="GO" id="GO:0008289">
    <property type="term" value="F:lipid binding"/>
    <property type="evidence" value="ECO:0007669"/>
    <property type="project" value="UniProtKB-KW"/>
</dbReference>
<dbReference type="GO" id="GO:0046933">
    <property type="term" value="F:proton-transporting ATP synthase activity, rotational mechanism"/>
    <property type="evidence" value="ECO:0007669"/>
    <property type="project" value="UniProtKB-UniRule"/>
</dbReference>
<dbReference type="CDD" id="cd18185">
    <property type="entry name" value="ATP-synt_Fo_c_ATPE"/>
    <property type="match status" value="1"/>
</dbReference>
<dbReference type="FunFam" id="1.20.20.10:FF:000002">
    <property type="entry name" value="ATP synthase subunit c"/>
    <property type="match status" value="1"/>
</dbReference>
<dbReference type="Gene3D" id="1.20.20.10">
    <property type="entry name" value="F1F0 ATP synthase subunit C"/>
    <property type="match status" value="1"/>
</dbReference>
<dbReference type="HAMAP" id="MF_01396">
    <property type="entry name" value="ATP_synth_c_bact"/>
    <property type="match status" value="1"/>
</dbReference>
<dbReference type="InterPro" id="IPR005953">
    <property type="entry name" value="ATP_synth_csu_bac/chlpt"/>
</dbReference>
<dbReference type="InterPro" id="IPR000454">
    <property type="entry name" value="ATP_synth_F0_csu"/>
</dbReference>
<dbReference type="InterPro" id="IPR020537">
    <property type="entry name" value="ATP_synth_F0_csu_DDCD_BS"/>
</dbReference>
<dbReference type="InterPro" id="IPR038662">
    <property type="entry name" value="ATP_synth_F0_csu_sf"/>
</dbReference>
<dbReference type="InterPro" id="IPR002379">
    <property type="entry name" value="ATPase_proteolipid_c-like_dom"/>
</dbReference>
<dbReference type="InterPro" id="IPR035921">
    <property type="entry name" value="F/V-ATP_Csub_sf"/>
</dbReference>
<dbReference type="NCBIfam" id="TIGR01260">
    <property type="entry name" value="ATP_synt_c"/>
    <property type="match status" value="1"/>
</dbReference>
<dbReference type="NCBIfam" id="NF005363">
    <property type="entry name" value="PRK06876.1"/>
    <property type="match status" value="1"/>
</dbReference>
<dbReference type="Pfam" id="PF00137">
    <property type="entry name" value="ATP-synt_C"/>
    <property type="match status" value="1"/>
</dbReference>
<dbReference type="PRINTS" id="PR00124">
    <property type="entry name" value="ATPASEC"/>
</dbReference>
<dbReference type="SUPFAM" id="SSF81333">
    <property type="entry name" value="F1F0 ATP synthase subunit C"/>
    <property type="match status" value="1"/>
</dbReference>
<dbReference type="PROSITE" id="PS00605">
    <property type="entry name" value="ATPASE_C"/>
    <property type="match status" value="1"/>
</dbReference>